<keyword id="KW-0028">Amino-acid biosynthesis</keyword>
<keyword id="KW-0100">Branched-chain amino acid biosynthesis</keyword>
<keyword id="KW-0460">Magnesium</keyword>
<keyword id="KW-0479">Metal-binding</keyword>
<keyword id="KW-0521">NADP</keyword>
<keyword id="KW-0560">Oxidoreductase</keyword>
<keyword id="KW-0677">Repeat</keyword>
<gene>
    <name evidence="2" type="primary">ilvC</name>
    <name type="ordered locus">STY3648</name>
    <name type="ordered locus">t3389</name>
</gene>
<accession>Q8Z381</accession>
<reference key="1">
    <citation type="journal article" date="2001" name="Nature">
        <title>Complete genome sequence of a multiple drug resistant Salmonella enterica serovar Typhi CT18.</title>
        <authorList>
            <person name="Parkhill J."/>
            <person name="Dougan G."/>
            <person name="James K.D."/>
            <person name="Thomson N.R."/>
            <person name="Pickard D."/>
            <person name="Wain J."/>
            <person name="Churcher C.M."/>
            <person name="Mungall K.L."/>
            <person name="Bentley S.D."/>
            <person name="Holden M.T.G."/>
            <person name="Sebaihia M."/>
            <person name="Baker S."/>
            <person name="Basham D."/>
            <person name="Brooks K."/>
            <person name="Chillingworth T."/>
            <person name="Connerton P."/>
            <person name="Cronin A."/>
            <person name="Davis P."/>
            <person name="Davies R.M."/>
            <person name="Dowd L."/>
            <person name="White N."/>
            <person name="Farrar J."/>
            <person name="Feltwell T."/>
            <person name="Hamlin N."/>
            <person name="Haque A."/>
            <person name="Hien T.T."/>
            <person name="Holroyd S."/>
            <person name="Jagels K."/>
            <person name="Krogh A."/>
            <person name="Larsen T.S."/>
            <person name="Leather S."/>
            <person name="Moule S."/>
            <person name="O'Gaora P."/>
            <person name="Parry C."/>
            <person name="Quail M.A."/>
            <person name="Rutherford K.M."/>
            <person name="Simmonds M."/>
            <person name="Skelton J."/>
            <person name="Stevens K."/>
            <person name="Whitehead S."/>
            <person name="Barrell B.G."/>
        </authorList>
    </citation>
    <scope>NUCLEOTIDE SEQUENCE [LARGE SCALE GENOMIC DNA]</scope>
    <source>
        <strain>CT18</strain>
    </source>
</reference>
<reference key="2">
    <citation type="journal article" date="2003" name="J. Bacteriol.">
        <title>Comparative genomics of Salmonella enterica serovar Typhi strains Ty2 and CT18.</title>
        <authorList>
            <person name="Deng W."/>
            <person name="Liou S.-R."/>
            <person name="Plunkett G. III"/>
            <person name="Mayhew G.F."/>
            <person name="Rose D.J."/>
            <person name="Burland V."/>
            <person name="Kodoyianni V."/>
            <person name="Schwartz D.C."/>
            <person name="Blattner F.R."/>
        </authorList>
    </citation>
    <scope>NUCLEOTIDE SEQUENCE [LARGE SCALE GENOMIC DNA]</scope>
    <source>
        <strain>ATCC 700931 / Ty2</strain>
    </source>
</reference>
<evidence type="ECO:0000250" key="1"/>
<evidence type="ECO:0000255" key="2">
    <source>
        <dbReference type="HAMAP-Rule" id="MF_00435"/>
    </source>
</evidence>
<evidence type="ECO:0000255" key="3">
    <source>
        <dbReference type="PROSITE-ProRule" id="PRU01197"/>
    </source>
</evidence>
<evidence type="ECO:0000255" key="4">
    <source>
        <dbReference type="PROSITE-ProRule" id="PRU01198"/>
    </source>
</evidence>
<comment type="function">
    <text evidence="2">Involved in the biosynthesis of branched-chain amino acids (BCAA). Catalyzes an alkyl-migration followed by a ketol-acid reduction of (S)-2-acetolactate (S2AL) to yield (R)-2,3-dihydroxy-isovalerate. In the isomerase reaction, S2AL is rearranged via a Mg-dependent methyl migration to produce 3-hydroxy-3-methyl-2-ketobutyrate (HMKB). In the reductase reaction, this 2-ketoacid undergoes a metal-dependent reduction by NADPH to yield (R)-2,3-dihydroxy-isovalerate.</text>
</comment>
<comment type="catalytic activity">
    <reaction evidence="2">
        <text>(2R)-2,3-dihydroxy-3-methylbutanoate + NADP(+) = (2S)-2-acetolactate + NADPH + H(+)</text>
        <dbReference type="Rhea" id="RHEA:22068"/>
        <dbReference type="ChEBI" id="CHEBI:15378"/>
        <dbReference type="ChEBI" id="CHEBI:49072"/>
        <dbReference type="ChEBI" id="CHEBI:57783"/>
        <dbReference type="ChEBI" id="CHEBI:58349"/>
        <dbReference type="ChEBI" id="CHEBI:58476"/>
        <dbReference type="EC" id="1.1.1.86"/>
    </reaction>
</comment>
<comment type="catalytic activity">
    <reaction evidence="2">
        <text>(2R,3R)-2,3-dihydroxy-3-methylpentanoate + NADP(+) = (S)-2-ethyl-2-hydroxy-3-oxobutanoate + NADPH + H(+)</text>
        <dbReference type="Rhea" id="RHEA:13493"/>
        <dbReference type="ChEBI" id="CHEBI:15378"/>
        <dbReference type="ChEBI" id="CHEBI:49256"/>
        <dbReference type="ChEBI" id="CHEBI:49258"/>
        <dbReference type="ChEBI" id="CHEBI:57783"/>
        <dbReference type="ChEBI" id="CHEBI:58349"/>
        <dbReference type="EC" id="1.1.1.86"/>
    </reaction>
</comment>
<comment type="cofactor">
    <cofactor evidence="2">
        <name>Mg(2+)</name>
        <dbReference type="ChEBI" id="CHEBI:18420"/>
    </cofactor>
    <text evidence="2">Binds 2 magnesium ions per subunit.</text>
</comment>
<comment type="pathway">
    <text evidence="2">Amino-acid biosynthesis; L-isoleucine biosynthesis; L-isoleucine from 2-oxobutanoate: step 2/4.</text>
</comment>
<comment type="pathway">
    <text evidence="2">Amino-acid biosynthesis; L-valine biosynthesis; L-valine from pyruvate: step 2/4.</text>
</comment>
<comment type="similarity">
    <text evidence="2">Belongs to the ketol-acid reductoisomerase family.</text>
</comment>
<organism>
    <name type="scientific">Salmonella typhi</name>
    <dbReference type="NCBI Taxonomy" id="90370"/>
    <lineage>
        <taxon>Bacteria</taxon>
        <taxon>Pseudomonadati</taxon>
        <taxon>Pseudomonadota</taxon>
        <taxon>Gammaproteobacteria</taxon>
        <taxon>Enterobacterales</taxon>
        <taxon>Enterobacteriaceae</taxon>
        <taxon>Salmonella</taxon>
    </lineage>
</organism>
<feature type="initiator methionine" description="Removed" evidence="1">
    <location>
        <position position="1"/>
    </location>
</feature>
<feature type="chain" id="PRO_0000151351" description="Ketol-acid reductoisomerase (NADP(+))">
    <location>
        <begin position="2"/>
        <end position="491"/>
    </location>
</feature>
<feature type="domain" description="KARI N-terminal Rossmann" evidence="3">
    <location>
        <begin position="15"/>
        <end position="208"/>
    </location>
</feature>
<feature type="domain" description="KARI C-terminal knotted 1" evidence="4">
    <location>
        <begin position="209"/>
        <end position="344"/>
    </location>
</feature>
<feature type="domain" description="KARI C-terminal knotted 2" evidence="4">
    <location>
        <begin position="345"/>
        <end position="484"/>
    </location>
</feature>
<feature type="active site" evidence="2">
    <location>
        <position position="132"/>
    </location>
</feature>
<feature type="binding site" evidence="2">
    <location>
        <begin position="45"/>
        <end position="48"/>
    </location>
    <ligand>
        <name>NADP(+)</name>
        <dbReference type="ChEBI" id="CHEBI:58349"/>
    </ligand>
</feature>
<feature type="binding site" evidence="2">
    <location>
        <position position="68"/>
    </location>
    <ligand>
        <name>NADP(+)</name>
        <dbReference type="ChEBI" id="CHEBI:58349"/>
    </ligand>
</feature>
<feature type="binding site" evidence="2">
    <location>
        <position position="76"/>
    </location>
    <ligand>
        <name>NADP(+)</name>
        <dbReference type="ChEBI" id="CHEBI:58349"/>
    </ligand>
</feature>
<feature type="binding site" evidence="2">
    <location>
        <position position="78"/>
    </location>
    <ligand>
        <name>NADP(+)</name>
        <dbReference type="ChEBI" id="CHEBI:58349"/>
    </ligand>
</feature>
<feature type="binding site" evidence="2">
    <location>
        <begin position="108"/>
        <end position="110"/>
    </location>
    <ligand>
        <name>NADP(+)</name>
        <dbReference type="ChEBI" id="CHEBI:58349"/>
    </ligand>
</feature>
<feature type="binding site" evidence="2">
    <location>
        <position position="158"/>
    </location>
    <ligand>
        <name>NADP(+)</name>
        <dbReference type="ChEBI" id="CHEBI:58349"/>
    </ligand>
</feature>
<feature type="binding site" evidence="2">
    <location>
        <position position="217"/>
    </location>
    <ligand>
        <name>Mg(2+)</name>
        <dbReference type="ChEBI" id="CHEBI:18420"/>
        <label>1</label>
    </ligand>
</feature>
<feature type="binding site" evidence="2">
    <location>
        <position position="217"/>
    </location>
    <ligand>
        <name>Mg(2+)</name>
        <dbReference type="ChEBI" id="CHEBI:18420"/>
        <label>2</label>
    </ligand>
</feature>
<feature type="binding site" evidence="2">
    <location>
        <position position="221"/>
    </location>
    <ligand>
        <name>Mg(2+)</name>
        <dbReference type="ChEBI" id="CHEBI:18420"/>
        <label>1</label>
    </ligand>
</feature>
<feature type="binding site" evidence="2">
    <location>
        <position position="389"/>
    </location>
    <ligand>
        <name>Mg(2+)</name>
        <dbReference type="ChEBI" id="CHEBI:18420"/>
        <label>2</label>
    </ligand>
</feature>
<feature type="binding site" evidence="2">
    <location>
        <position position="393"/>
    </location>
    <ligand>
        <name>Mg(2+)</name>
        <dbReference type="ChEBI" id="CHEBI:18420"/>
        <label>2</label>
    </ligand>
</feature>
<feature type="binding site" evidence="2">
    <location>
        <position position="414"/>
    </location>
    <ligand>
        <name>substrate</name>
    </ligand>
</feature>
<dbReference type="EC" id="1.1.1.86" evidence="2"/>
<dbReference type="EMBL" id="AL513382">
    <property type="protein sequence ID" value="CAD09408.1"/>
    <property type="molecule type" value="Genomic_DNA"/>
</dbReference>
<dbReference type="EMBL" id="AE014613">
    <property type="protein sequence ID" value="AAO70913.1"/>
    <property type="molecule type" value="Genomic_DNA"/>
</dbReference>
<dbReference type="RefSeq" id="NP_457839.1">
    <property type="nucleotide sequence ID" value="NC_003198.1"/>
</dbReference>
<dbReference type="RefSeq" id="WP_000024943.1">
    <property type="nucleotide sequence ID" value="NZ_WSUR01000032.1"/>
</dbReference>
<dbReference type="SMR" id="Q8Z381"/>
<dbReference type="STRING" id="220341.gene:17587503"/>
<dbReference type="KEGG" id="stt:t3389"/>
<dbReference type="KEGG" id="sty:STY3648"/>
<dbReference type="PATRIC" id="fig|220341.7.peg.3717"/>
<dbReference type="eggNOG" id="COG0059">
    <property type="taxonomic scope" value="Bacteria"/>
</dbReference>
<dbReference type="HOGENOM" id="CLU_551905_0_0_6"/>
<dbReference type="OMA" id="ILCFDKM"/>
<dbReference type="OrthoDB" id="9804088at2"/>
<dbReference type="UniPathway" id="UPA00047">
    <property type="reaction ID" value="UER00056"/>
</dbReference>
<dbReference type="UniPathway" id="UPA00049">
    <property type="reaction ID" value="UER00060"/>
</dbReference>
<dbReference type="Proteomes" id="UP000000541">
    <property type="component" value="Chromosome"/>
</dbReference>
<dbReference type="Proteomes" id="UP000002670">
    <property type="component" value="Chromosome"/>
</dbReference>
<dbReference type="GO" id="GO:0005829">
    <property type="term" value="C:cytosol"/>
    <property type="evidence" value="ECO:0007669"/>
    <property type="project" value="TreeGrafter"/>
</dbReference>
<dbReference type="GO" id="GO:0004455">
    <property type="term" value="F:ketol-acid reductoisomerase activity"/>
    <property type="evidence" value="ECO:0007669"/>
    <property type="project" value="UniProtKB-UniRule"/>
</dbReference>
<dbReference type="GO" id="GO:0000287">
    <property type="term" value="F:magnesium ion binding"/>
    <property type="evidence" value="ECO:0007669"/>
    <property type="project" value="UniProtKB-UniRule"/>
</dbReference>
<dbReference type="GO" id="GO:0009097">
    <property type="term" value="P:isoleucine biosynthetic process"/>
    <property type="evidence" value="ECO:0007669"/>
    <property type="project" value="UniProtKB-UniRule"/>
</dbReference>
<dbReference type="GO" id="GO:0009099">
    <property type="term" value="P:L-valine biosynthetic process"/>
    <property type="evidence" value="ECO:0007669"/>
    <property type="project" value="UniProtKB-UniRule"/>
</dbReference>
<dbReference type="FunFam" id="1.10.1040.10:FF:000007">
    <property type="entry name" value="Ketol-acid reductoisomerase (NADP(+))"/>
    <property type="match status" value="1"/>
</dbReference>
<dbReference type="FunFam" id="3.40.50.720:FF:000043">
    <property type="entry name" value="Ketol-acid reductoisomerase (NADP(+))"/>
    <property type="match status" value="1"/>
</dbReference>
<dbReference type="Gene3D" id="1.10.1040.10">
    <property type="entry name" value="N-(1-d-carboxylethyl)-l-norvaline Dehydrogenase, domain 2"/>
    <property type="match status" value="1"/>
</dbReference>
<dbReference type="Gene3D" id="3.40.50.720">
    <property type="entry name" value="NAD(P)-binding Rossmann-like Domain"/>
    <property type="match status" value="1"/>
</dbReference>
<dbReference type="HAMAP" id="MF_00435">
    <property type="entry name" value="IlvC"/>
    <property type="match status" value="1"/>
</dbReference>
<dbReference type="InterPro" id="IPR008927">
    <property type="entry name" value="6-PGluconate_DH-like_C_sf"/>
</dbReference>
<dbReference type="InterPro" id="IPR013328">
    <property type="entry name" value="6PGD_dom2"/>
</dbReference>
<dbReference type="InterPro" id="IPR013023">
    <property type="entry name" value="KARI"/>
</dbReference>
<dbReference type="InterPro" id="IPR000506">
    <property type="entry name" value="KARI_C"/>
</dbReference>
<dbReference type="InterPro" id="IPR013116">
    <property type="entry name" value="KARI_N"/>
</dbReference>
<dbReference type="InterPro" id="IPR036291">
    <property type="entry name" value="NAD(P)-bd_dom_sf"/>
</dbReference>
<dbReference type="NCBIfam" id="TIGR00465">
    <property type="entry name" value="ilvC"/>
    <property type="match status" value="1"/>
</dbReference>
<dbReference type="NCBIfam" id="NF003557">
    <property type="entry name" value="PRK05225.1"/>
    <property type="match status" value="1"/>
</dbReference>
<dbReference type="PANTHER" id="PTHR21371">
    <property type="entry name" value="KETOL-ACID REDUCTOISOMERASE, MITOCHONDRIAL"/>
    <property type="match status" value="1"/>
</dbReference>
<dbReference type="PANTHER" id="PTHR21371:SF1">
    <property type="entry name" value="KETOL-ACID REDUCTOISOMERASE, MITOCHONDRIAL"/>
    <property type="match status" value="1"/>
</dbReference>
<dbReference type="Pfam" id="PF01450">
    <property type="entry name" value="KARI_C"/>
    <property type="match status" value="2"/>
</dbReference>
<dbReference type="Pfam" id="PF07991">
    <property type="entry name" value="KARI_N"/>
    <property type="match status" value="1"/>
</dbReference>
<dbReference type="SUPFAM" id="SSF48179">
    <property type="entry name" value="6-phosphogluconate dehydrogenase C-terminal domain-like"/>
    <property type="match status" value="2"/>
</dbReference>
<dbReference type="SUPFAM" id="SSF51735">
    <property type="entry name" value="NAD(P)-binding Rossmann-fold domains"/>
    <property type="match status" value="1"/>
</dbReference>
<dbReference type="PROSITE" id="PS51851">
    <property type="entry name" value="KARI_C"/>
    <property type="match status" value="2"/>
</dbReference>
<dbReference type="PROSITE" id="PS51850">
    <property type="entry name" value="KARI_N"/>
    <property type="match status" value="1"/>
</dbReference>
<proteinExistence type="inferred from homology"/>
<name>ILVC_SALTI</name>
<protein>
    <recommendedName>
        <fullName evidence="2">Ketol-acid reductoisomerase (NADP(+))</fullName>
        <shortName evidence="2">KARI</shortName>
        <ecNumber evidence="2">1.1.1.86</ecNumber>
    </recommendedName>
    <alternativeName>
        <fullName evidence="2">Acetohydroxy-acid isomeroreductase</fullName>
        <shortName evidence="2">AHIR</shortName>
    </alternativeName>
    <alternativeName>
        <fullName evidence="2">Alpha-keto-beta-hydroxylacyl reductoisomerase</fullName>
    </alternativeName>
    <alternativeName>
        <fullName evidence="2">Ketol-acid reductoisomerase type 2</fullName>
    </alternativeName>
    <alternativeName>
        <fullName evidence="2">Ketol-acid reductoisomerase type II</fullName>
    </alternativeName>
</protein>
<sequence length="491" mass="53926">MANYFNTLNLRQQLAQLGKCRFMGRDEFADGASYLQGKKVVIVGCGAQGLNQGLNMRDSGLDISYALRKEAIAEKRASWRKATENGFKVGTYEELIPQADLVVNLTPDKQHSDVVRSVQPLMKDGAALGYSHGFNIVEVGEQIRKDITVVMVAPKCPGTEVREEYKRGFGVPTLIAVHPENDPKGEGMAIAKAWAAATGGHRAGVLESSFVAEVKSDLMGEQTILCGMLQAGSLLCFDKLVAEGTDPAYAEKLIQFGWETITEALKQGGITLMMDRLSNPAKLRAYALSEQLKEIMAPLFQKHMDDIISGEFSSGMMADWANDDKKLLTWREETGKTAFETAPQFEGKIGEQEYFDKGVLMIAMVKAGVELAFETMVDSGIIEESAYYESLHELPLIANTIARKRLYEMNVVISDTAEYGNYLFSYACVPLLKPFMAELQPGDLGSAIPEGAVDNAQLRDVNDAIRSHAIEQVGKKLRGYMTDMKRIAVAG</sequence>